<evidence type="ECO:0000255" key="1">
    <source>
        <dbReference type="HAMAP-Rule" id="MF_00017"/>
    </source>
</evidence>
<reference key="1">
    <citation type="journal article" date="2005" name="J. Bacteriol.">
        <title>Genomic sequence of an otitis media isolate of nontypeable Haemophilus influenzae: comparative study with H. influenzae serotype d, strain KW20.</title>
        <authorList>
            <person name="Harrison A."/>
            <person name="Dyer D.W."/>
            <person name="Gillaspy A."/>
            <person name="Ray W.C."/>
            <person name="Mungur R."/>
            <person name="Carson M.B."/>
            <person name="Zhong H."/>
            <person name="Gipson J."/>
            <person name="Gipson M."/>
            <person name="Johnson L.S."/>
            <person name="Lewis L."/>
            <person name="Bakaletz L.O."/>
            <person name="Munson R.S. Jr."/>
        </authorList>
    </citation>
    <scope>NUCLEOTIDE SEQUENCE [LARGE SCALE GENOMIC DNA]</scope>
    <source>
        <strain>86-028NP</strain>
    </source>
</reference>
<accession>Q4QNA2</accession>
<comment type="function">
    <text evidence="1">May play a role in DNA repair. It seems to be involved in an RecBC-independent recombinational process of DNA repair. It may act with RecF and RecO.</text>
</comment>
<comment type="similarity">
    <text evidence="1">Belongs to the RecR family.</text>
</comment>
<feature type="chain" id="PRO_0000190329" description="Recombination protein RecR">
    <location>
        <begin position="1"/>
        <end position="200"/>
    </location>
</feature>
<feature type="domain" description="Toprim" evidence="1">
    <location>
        <begin position="81"/>
        <end position="176"/>
    </location>
</feature>
<feature type="zinc finger region" description="C4-type" evidence="1">
    <location>
        <begin position="57"/>
        <end position="72"/>
    </location>
</feature>
<organism>
    <name type="scientific">Haemophilus influenzae (strain 86-028NP)</name>
    <dbReference type="NCBI Taxonomy" id="281310"/>
    <lineage>
        <taxon>Bacteria</taxon>
        <taxon>Pseudomonadati</taxon>
        <taxon>Pseudomonadota</taxon>
        <taxon>Gammaproteobacteria</taxon>
        <taxon>Pasteurellales</taxon>
        <taxon>Pasteurellaceae</taxon>
        <taxon>Haemophilus</taxon>
    </lineage>
</organism>
<protein>
    <recommendedName>
        <fullName evidence="1">Recombination protein RecR</fullName>
    </recommendedName>
</protein>
<dbReference type="EMBL" id="CP000057">
    <property type="protein sequence ID" value="AAX87495.1"/>
    <property type="molecule type" value="Genomic_DNA"/>
</dbReference>
<dbReference type="RefSeq" id="WP_005626527.1">
    <property type="nucleotide sequence ID" value="NC_007146.2"/>
</dbReference>
<dbReference type="SMR" id="Q4QNA2"/>
<dbReference type="GeneID" id="93219456"/>
<dbReference type="KEGG" id="hit:NTHI0570"/>
<dbReference type="HOGENOM" id="CLU_060739_1_2_6"/>
<dbReference type="Proteomes" id="UP000002525">
    <property type="component" value="Chromosome"/>
</dbReference>
<dbReference type="GO" id="GO:0003677">
    <property type="term" value="F:DNA binding"/>
    <property type="evidence" value="ECO:0007669"/>
    <property type="project" value="UniProtKB-UniRule"/>
</dbReference>
<dbReference type="GO" id="GO:0008270">
    <property type="term" value="F:zinc ion binding"/>
    <property type="evidence" value="ECO:0007669"/>
    <property type="project" value="UniProtKB-KW"/>
</dbReference>
<dbReference type="GO" id="GO:0006310">
    <property type="term" value="P:DNA recombination"/>
    <property type="evidence" value="ECO:0007669"/>
    <property type="project" value="UniProtKB-UniRule"/>
</dbReference>
<dbReference type="GO" id="GO:0006281">
    <property type="term" value="P:DNA repair"/>
    <property type="evidence" value="ECO:0007669"/>
    <property type="project" value="UniProtKB-UniRule"/>
</dbReference>
<dbReference type="CDD" id="cd01025">
    <property type="entry name" value="TOPRIM_recR"/>
    <property type="match status" value="1"/>
</dbReference>
<dbReference type="FunFam" id="1.10.8.420:FF:000001">
    <property type="entry name" value="Recombination protein RecR"/>
    <property type="match status" value="1"/>
</dbReference>
<dbReference type="FunFam" id="3.40.1360.10:FF:000001">
    <property type="entry name" value="Recombination protein RecR"/>
    <property type="match status" value="1"/>
</dbReference>
<dbReference type="Gene3D" id="3.40.1360.10">
    <property type="match status" value="1"/>
</dbReference>
<dbReference type="Gene3D" id="6.10.250.240">
    <property type="match status" value="1"/>
</dbReference>
<dbReference type="Gene3D" id="1.10.8.420">
    <property type="entry name" value="RecR Domain 1"/>
    <property type="match status" value="1"/>
</dbReference>
<dbReference type="HAMAP" id="MF_00017">
    <property type="entry name" value="RecR"/>
    <property type="match status" value="1"/>
</dbReference>
<dbReference type="InterPro" id="IPR000093">
    <property type="entry name" value="DNA_Rcmb_RecR"/>
</dbReference>
<dbReference type="InterPro" id="IPR023627">
    <property type="entry name" value="Rcmb_RecR"/>
</dbReference>
<dbReference type="InterPro" id="IPR015967">
    <property type="entry name" value="Rcmb_RecR_Znf"/>
</dbReference>
<dbReference type="InterPro" id="IPR006171">
    <property type="entry name" value="TOPRIM_dom"/>
</dbReference>
<dbReference type="InterPro" id="IPR034137">
    <property type="entry name" value="TOPRIM_RecR"/>
</dbReference>
<dbReference type="NCBIfam" id="TIGR00615">
    <property type="entry name" value="recR"/>
    <property type="match status" value="1"/>
</dbReference>
<dbReference type="PANTHER" id="PTHR30446">
    <property type="entry name" value="RECOMBINATION PROTEIN RECR"/>
    <property type="match status" value="1"/>
</dbReference>
<dbReference type="PANTHER" id="PTHR30446:SF0">
    <property type="entry name" value="RECOMBINATION PROTEIN RECR"/>
    <property type="match status" value="1"/>
</dbReference>
<dbReference type="Pfam" id="PF21175">
    <property type="entry name" value="RecR_C"/>
    <property type="match status" value="1"/>
</dbReference>
<dbReference type="Pfam" id="PF21176">
    <property type="entry name" value="RecR_HhH"/>
    <property type="match status" value="1"/>
</dbReference>
<dbReference type="Pfam" id="PF02132">
    <property type="entry name" value="RecR_ZnF"/>
    <property type="match status" value="1"/>
</dbReference>
<dbReference type="Pfam" id="PF13662">
    <property type="entry name" value="Toprim_4"/>
    <property type="match status" value="1"/>
</dbReference>
<dbReference type="SMART" id="SM00493">
    <property type="entry name" value="TOPRIM"/>
    <property type="match status" value="1"/>
</dbReference>
<dbReference type="SUPFAM" id="SSF111304">
    <property type="entry name" value="Recombination protein RecR"/>
    <property type="match status" value="1"/>
</dbReference>
<dbReference type="PROSITE" id="PS01300">
    <property type="entry name" value="RECR"/>
    <property type="match status" value="1"/>
</dbReference>
<dbReference type="PROSITE" id="PS50880">
    <property type="entry name" value="TOPRIM"/>
    <property type="match status" value="1"/>
</dbReference>
<sequence>MQSSPLLEHLIENLRCLPGVGPKSAQRMAYHLLQRNRSGGMNLARALTEAMSKIGHCSQCRDFTEEDTCNICNNPRRQNSGLLCVVEMPADIQAIEQTGQFSGRYFVLMGHLSPLDGIGPREIGLDLLQKRLVEESFHEVILATNPTVEGDATANYIAEMCRQHNIKVSRIAHGIPVGGELETVDGTTLTHSFLGRRQID</sequence>
<name>RECR_HAEI8</name>
<keyword id="KW-0227">DNA damage</keyword>
<keyword id="KW-0233">DNA recombination</keyword>
<keyword id="KW-0234">DNA repair</keyword>
<keyword id="KW-0479">Metal-binding</keyword>
<keyword id="KW-0862">Zinc</keyword>
<keyword id="KW-0863">Zinc-finger</keyword>
<gene>
    <name evidence="1" type="primary">recR</name>
    <name type="ordered locus">NTHI0570</name>
</gene>
<proteinExistence type="inferred from homology"/>